<protein>
    <recommendedName>
        <fullName evidence="6">T cell receptor beta joining 2-2</fullName>
    </recommendedName>
</protein>
<comment type="function">
    <text evidence="1 3 4 5">J region of the variable domain of T cell receptor (TR) beta chain that participates in the antigen recognition (PubMed:24600447). Alpha-beta T cell receptors are antigen specific receptors which are essential to the immune response and are present on the cell surface of T lymphocytes. Recognize peptide-major histocompatibility (MH) (pMH) complexes that are displayed by antigen presenting cells (APC), a prerequisite for efficient T cell adaptive immunity against pathogens (PubMed:25493333). Binding of alpha-beta TR to pMH complex initiates TR-CD3 clustering on the cell surface and intracellular activation of LCK that phosphorylates the ITAM motifs of CD3G, CD3D, CD3E and CD247 enabling the recruitment of ZAP70. In turn ZAP70 phosphorylates LAT, which recruits numerous signaling molecules to form the LAT signalosome. The LAT signalosome propagates signal branching to three major signaling pathways, the calcium, the mitogen-activated protein kinase (MAPK) kinase and the nuclear factor NF-kappa-B (NF-kB) pathways, leading to the mobilization of transcription factors that are critical for gene expression and essential for T cell growth and differentiation (PubMed:23524462). The T cell repertoire is generated in the thymus, by V-(D)-J rearrangement. This repertoire is then shaped by intrathymic selection events to generate a peripheral T cell pool of self-MH restricted, non-autoaggressive T cells. Post-thymic interaction of alpha-beta TR with the pMH complexes shapes TR structural and functional avidity (PubMed:15040585).</text>
</comment>
<comment type="subunit">
    <text evidence="2">Alpha-beta TR is a heterodimer composed of an alpha and beta chain; disulfide-linked. The alpha-beta TR is associated with the transmembrane signaling CD3 coreceptor proteins to form the TR-CD3 (TcR or TCR). The assembly of alpha-beta TR heterodimers with CD3 occurs in the endoplasmic reticulum where a single alpha-beta TR heterodimer associates with one CD3D-CD3E heterodimer, one CD3G-CD3E heterodimer and one CD247 homodimer forming a stable octameric structure. CD3D-CD3E and CD3G-CD3E heterodimers preferentially associate with TR alpha and TR beta chains, respectively. The association of the CD247 homodimer is the last step of TcR assembly in the endoplasmic reticulum and is required for transport to the cell surface.</text>
</comment>
<comment type="subcellular location">
    <subcellularLocation>
        <location evidence="2">Cell membrane</location>
    </subcellularLocation>
</comment>
<sequence>NTGELFFGEGSRLTVL</sequence>
<keyword id="KW-1064">Adaptive immunity</keyword>
<keyword id="KW-1003">Cell membrane</keyword>
<keyword id="KW-0391">Immunity</keyword>
<keyword id="KW-0472">Membrane</keyword>
<keyword id="KW-0675">Receptor</keyword>
<keyword id="KW-1185">Reference proteome</keyword>
<keyword id="KW-1279">T cell receptor</keyword>
<organism>
    <name type="scientific">Homo sapiens</name>
    <name type="common">Human</name>
    <dbReference type="NCBI Taxonomy" id="9606"/>
    <lineage>
        <taxon>Eukaryota</taxon>
        <taxon>Metazoa</taxon>
        <taxon>Chordata</taxon>
        <taxon>Craniata</taxon>
        <taxon>Vertebrata</taxon>
        <taxon>Euteleostomi</taxon>
        <taxon>Mammalia</taxon>
        <taxon>Eutheria</taxon>
        <taxon>Euarchontoglires</taxon>
        <taxon>Primates</taxon>
        <taxon>Haplorrhini</taxon>
        <taxon>Catarrhini</taxon>
        <taxon>Hominidae</taxon>
        <taxon>Homo</taxon>
    </lineage>
</organism>
<accession>A0A0A0MT94</accession>
<dbReference type="EMBL" id="AC239618">
    <property type="status" value="NOT_ANNOTATED_CDS"/>
    <property type="molecule type" value="Genomic_DNA"/>
</dbReference>
<dbReference type="EMBL" id="AC245427">
    <property type="status" value="NOT_ANNOTATED_CDS"/>
    <property type="molecule type" value="Genomic_DNA"/>
</dbReference>
<dbReference type="IMGT_GENE-DB" id="TRBJ2-2"/>
<dbReference type="BioMuta" id="TRBJ2-2"/>
<dbReference type="UCSC" id="uc064itj.1">
    <property type="organism name" value="human"/>
</dbReference>
<dbReference type="AGR" id="HGNC:12169"/>
<dbReference type="GeneCards" id="TRBJ2-2"/>
<dbReference type="HGNC" id="HGNC:12169">
    <property type="gene designation" value="TRBJ2-2"/>
</dbReference>
<dbReference type="neXtProt" id="NX_A0A0A0MT94"/>
<dbReference type="HOGENOM" id="CLU_221942_7_2_1"/>
<dbReference type="InParanoid" id="A0A0A0MT94"/>
<dbReference type="PAN-GO" id="A0A0A0MT94">
    <property type="GO annotations" value="0 GO annotations based on evolutionary models"/>
</dbReference>
<dbReference type="ChiTaRS" id="TRBJ2-2">
    <property type="organism name" value="human"/>
</dbReference>
<dbReference type="PRO" id="PR:A0A0A0MT94"/>
<dbReference type="Proteomes" id="UP000005640">
    <property type="component" value="Unplaced"/>
</dbReference>
<dbReference type="GO" id="GO:0042101">
    <property type="term" value="C:T cell receptor complex"/>
    <property type="evidence" value="ECO:0007669"/>
    <property type="project" value="UniProtKB-KW"/>
</dbReference>
<dbReference type="GO" id="GO:0002250">
    <property type="term" value="P:adaptive immune response"/>
    <property type="evidence" value="ECO:0007669"/>
    <property type="project" value="UniProtKB-KW"/>
</dbReference>
<proteinExistence type="predicted"/>
<name>TJB22_HUMAN</name>
<evidence type="ECO:0000303" key="1">
    <source>
    </source>
</evidence>
<evidence type="ECO:0000303" key="2">
    <source>
    </source>
</evidence>
<evidence type="ECO:0000303" key="3">
    <source>
    </source>
</evidence>
<evidence type="ECO:0000303" key="4">
    <source>
    </source>
</evidence>
<evidence type="ECO:0000303" key="5">
    <source>
    </source>
</evidence>
<evidence type="ECO:0000303" key="6">
    <source ref="2"/>
</evidence>
<evidence type="ECO:0000312" key="7">
    <source>
        <dbReference type="HGNC" id="HGNC:12169"/>
    </source>
</evidence>
<feature type="chain" id="PRO_0000447308" description="T cell receptor beta joining 2-2">
    <location>
        <begin position="1" status="less than"/>
        <end position="16" status="greater than"/>
    </location>
</feature>
<feature type="non-terminal residue">
    <location>
        <position position="1"/>
    </location>
</feature>
<feature type="non-terminal residue">
    <location>
        <position position="16"/>
    </location>
</feature>
<gene>
    <name evidence="6 7" type="primary">TRBJ2-2</name>
</gene>
<reference key="1">
    <citation type="journal article" date="2003" name="Nature">
        <title>The DNA sequence of human chromosome 7.</title>
        <authorList>
            <person name="Hillier L.W."/>
            <person name="Fulton R.S."/>
            <person name="Fulton L.A."/>
            <person name="Graves T.A."/>
            <person name="Pepin K.H."/>
            <person name="Wagner-McPherson C."/>
            <person name="Layman D."/>
            <person name="Maas J."/>
            <person name="Jaeger S."/>
            <person name="Walker R."/>
            <person name="Wylie K."/>
            <person name="Sekhon M."/>
            <person name="Becker M.C."/>
            <person name="O'Laughlin M.D."/>
            <person name="Schaller M.E."/>
            <person name="Fewell G.A."/>
            <person name="Delehaunty K.D."/>
            <person name="Miner T.L."/>
            <person name="Nash W.E."/>
            <person name="Cordes M."/>
            <person name="Du H."/>
            <person name="Sun H."/>
            <person name="Edwards J."/>
            <person name="Bradshaw-Cordum H."/>
            <person name="Ali J."/>
            <person name="Andrews S."/>
            <person name="Isak A."/>
            <person name="Vanbrunt A."/>
            <person name="Nguyen C."/>
            <person name="Du F."/>
            <person name="Lamar B."/>
            <person name="Courtney L."/>
            <person name="Kalicki J."/>
            <person name="Ozersky P."/>
            <person name="Bielicki L."/>
            <person name="Scott K."/>
            <person name="Holmes A."/>
            <person name="Harkins R."/>
            <person name="Harris A."/>
            <person name="Strong C.M."/>
            <person name="Hou S."/>
            <person name="Tomlinson C."/>
            <person name="Dauphin-Kohlberg S."/>
            <person name="Kozlowicz-Reilly A."/>
            <person name="Leonard S."/>
            <person name="Rohlfing T."/>
            <person name="Rock S.M."/>
            <person name="Tin-Wollam A.-M."/>
            <person name="Abbott A."/>
            <person name="Minx P."/>
            <person name="Maupin R."/>
            <person name="Strowmatt C."/>
            <person name="Latreille P."/>
            <person name="Miller N."/>
            <person name="Johnson D."/>
            <person name="Murray J."/>
            <person name="Woessner J.P."/>
            <person name="Wendl M.C."/>
            <person name="Yang S.-P."/>
            <person name="Schultz B.R."/>
            <person name="Wallis J.W."/>
            <person name="Spieth J."/>
            <person name="Bieri T.A."/>
            <person name="Nelson J.O."/>
            <person name="Berkowicz N."/>
            <person name="Wohldmann P.E."/>
            <person name="Cook L.L."/>
            <person name="Hickenbotham M.T."/>
            <person name="Eldred J."/>
            <person name="Williams D."/>
            <person name="Bedell J.A."/>
            <person name="Mardis E.R."/>
            <person name="Clifton S.W."/>
            <person name="Chissoe S.L."/>
            <person name="Marra M.A."/>
            <person name="Raymond C."/>
            <person name="Haugen E."/>
            <person name="Gillett W."/>
            <person name="Zhou Y."/>
            <person name="James R."/>
            <person name="Phelps K."/>
            <person name="Iadanoto S."/>
            <person name="Bubb K."/>
            <person name="Simms E."/>
            <person name="Levy R."/>
            <person name="Clendenning J."/>
            <person name="Kaul R."/>
            <person name="Kent W.J."/>
            <person name="Furey T.S."/>
            <person name="Baertsch R.A."/>
            <person name="Brent M.R."/>
            <person name="Keibler E."/>
            <person name="Flicek P."/>
            <person name="Bork P."/>
            <person name="Suyama M."/>
            <person name="Bailey J.A."/>
            <person name="Portnoy M.E."/>
            <person name="Torrents D."/>
            <person name="Chinwalla A.T."/>
            <person name="Gish W.R."/>
            <person name="Eddy S.R."/>
            <person name="McPherson J.D."/>
            <person name="Olson M.V."/>
            <person name="Eichler E.E."/>
            <person name="Green E.D."/>
            <person name="Waterston R.H."/>
            <person name="Wilson R.K."/>
        </authorList>
    </citation>
    <scope>NUCLEOTIDE SEQUENCE [LARGE SCALE GENOMIC DNA] (IMGT ALLELE TRBJ2-2*01)</scope>
</reference>
<reference key="2">
    <citation type="book" date="2001" name="The T Cell Receptor FactsBook.">
        <title>The T Cell Receptor FactsBook.</title>
        <editorList>
            <person name="Lefranc M.P."/>
            <person name="Lefranc G."/>
        </editorList>
        <authorList>
            <person name="Lefranc M.P."/>
            <person name="Lefranc G."/>
        </authorList>
    </citation>
    <scope>NOMENCLATURE</scope>
</reference>
<reference key="3">
    <citation type="journal article" date="2004" name="Nat. Rev. Immunol.">
        <title>The many important facets of T-cell repertoire diversity.</title>
        <authorList>
            <person name="Nikolich-Zugich J."/>
            <person name="Slifka M.K."/>
            <person name="Messaoudi I."/>
        </authorList>
    </citation>
    <scope>REVIEW ON T CELL REPERTOIRE DIVERSITY</scope>
</reference>
<reference key="4">
    <citation type="journal article" date="2010" name="Cold Spring Harb. Perspect. Biol.">
        <title>Structural biology of the T-cell receptor: insights into receptor assembly, ligand recognition, and initiation of signaling.</title>
        <authorList>
            <person name="Wucherpfennig K.W."/>
            <person name="Gagnon E."/>
            <person name="Call M.J."/>
            <person name="Huseby E.S."/>
            <person name="Call M.E."/>
        </authorList>
    </citation>
    <scope>REVIEW ON T CELL RECEPTOR-CD3 COMPLEX ASSEMBLY</scope>
    <scope>SUBCELLULAR LOCATION</scope>
</reference>
<reference key="5">
    <citation type="journal article" date="2013" name="Nat. Rev. Immunol.">
        <title>T cell receptor signalling networks: branched, diversified and bounded.</title>
        <authorList>
            <person name="Brownlie R.J."/>
            <person name="Zamoyska R."/>
        </authorList>
    </citation>
    <scope>REVIEW ON T CELL RECEPTOR SIGNALING</scope>
</reference>
<reference key="6">
    <citation type="journal article" date="2014" name="Front. Immunol.">
        <title>Immunoglobulin and T Cell Receptor Genes: IMGT((R)) and the Birth and Rise of Immunoinformatics.</title>
        <authorList>
            <person name="Lefranc M.P."/>
        </authorList>
    </citation>
    <scope>NOMENCLATURE</scope>
</reference>
<reference key="7">
    <citation type="journal article" date="2015" name="Annu. Rev. Immunol.">
        <title>T cell antigen receptor recognition of antigen-presenting molecules.</title>
        <authorList>
            <person name="Rossjohn J."/>
            <person name="Gras S."/>
            <person name="Miles J.J."/>
            <person name="Turner S.J."/>
            <person name="Godfrey D.I."/>
            <person name="McCluskey J."/>
        </authorList>
    </citation>
    <scope>REVIEW ON FUNCTION</scope>
</reference>